<comment type="function">
    <text evidence="1">Together with its co-chaperonin GroES, plays an essential role in assisting protein folding. The GroEL-GroES system forms a nano-cage that allows encapsulation of the non-native substrate proteins and provides a physical environment optimized to promote and accelerate protein folding.</text>
</comment>
<comment type="catalytic activity">
    <reaction evidence="1">
        <text>ATP + H2O + a folded polypeptide = ADP + phosphate + an unfolded polypeptide.</text>
        <dbReference type="EC" id="5.6.1.7"/>
    </reaction>
</comment>
<comment type="subunit">
    <text evidence="1">Forms a cylinder of 14 subunits composed of two heptameric rings stacked back-to-back. Interacts with the co-chaperonin GroES.</text>
</comment>
<comment type="subcellular location">
    <subcellularLocation>
        <location evidence="1">Cytoplasm</location>
    </subcellularLocation>
</comment>
<comment type="similarity">
    <text evidence="1">Belongs to the chaperonin (HSP60) family.</text>
</comment>
<gene>
    <name evidence="1" type="primary">groEL</name>
    <name evidence="1" type="synonym">groL</name>
    <name type="synonym">mopA</name>
</gene>
<dbReference type="EC" id="5.6.1.7" evidence="1"/>
<dbReference type="EMBL" id="AB008142">
    <property type="protein sequence ID" value="BAA25217.1"/>
    <property type="molecule type" value="Genomic_DNA"/>
</dbReference>
<dbReference type="EMBL" id="AB008150">
    <property type="protein sequence ID" value="BAA25233.1"/>
    <property type="molecule type" value="Genomic_DNA"/>
</dbReference>
<dbReference type="STRING" id="549.BEE12_08965"/>
<dbReference type="eggNOG" id="COG0459">
    <property type="taxonomic scope" value="Bacteria"/>
</dbReference>
<dbReference type="GO" id="GO:0005737">
    <property type="term" value="C:cytoplasm"/>
    <property type="evidence" value="ECO:0007669"/>
    <property type="project" value="UniProtKB-SubCell"/>
</dbReference>
<dbReference type="GO" id="GO:0005524">
    <property type="term" value="F:ATP binding"/>
    <property type="evidence" value="ECO:0007669"/>
    <property type="project" value="UniProtKB-KW"/>
</dbReference>
<dbReference type="GO" id="GO:0140662">
    <property type="term" value="F:ATP-dependent protein folding chaperone"/>
    <property type="evidence" value="ECO:0007669"/>
    <property type="project" value="InterPro"/>
</dbReference>
<dbReference type="GO" id="GO:0016853">
    <property type="term" value="F:isomerase activity"/>
    <property type="evidence" value="ECO:0007669"/>
    <property type="project" value="UniProtKB-KW"/>
</dbReference>
<dbReference type="GO" id="GO:0042026">
    <property type="term" value="P:protein refolding"/>
    <property type="evidence" value="ECO:0007669"/>
    <property type="project" value="InterPro"/>
</dbReference>
<dbReference type="CDD" id="cd03344">
    <property type="entry name" value="GroEL"/>
    <property type="match status" value="1"/>
</dbReference>
<dbReference type="FunFam" id="1.10.560.10:FF:000001">
    <property type="entry name" value="60 kDa chaperonin"/>
    <property type="match status" value="1"/>
</dbReference>
<dbReference type="FunFam" id="3.50.7.10:FF:000001">
    <property type="entry name" value="60 kDa chaperonin"/>
    <property type="match status" value="1"/>
</dbReference>
<dbReference type="Gene3D" id="3.50.7.10">
    <property type="entry name" value="GroEL"/>
    <property type="match status" value="1"/>
</dbReference>
<dbReference type="Gene3D" id="1.10.560.10">
    <property type="entry name" value="GroEL-like equatorial domain"/>
    <property type="match status" value="1"/>
</dbReference>
<dbReference type="Gene3D" id="3.30.260.10">
    <property type="entry name" value="TCP-1-like chaperonin intermediate domain"/>
    <property type="match status" value="1"/>
</dbReference>
<dbReference type="HAMAP" id="MF_00600">
    <property type="entry name" value="CH60"/>
    <property type="match status" value="1"/>
</dbReference>
<dbReference type="InterPro" id="IPR018370">
    <property type="entry name" value="Chaperonin_Cpn60_CS"/>
</dbReference>
<dbReference type="InterPro" id="IPR001844">
    <property type="entry name" value="Cpn60/GroEL"/>
</dbReference>
<dbReference type="InterPro" id="IPR002423">
    <property type="entry name" value="Cpn60/GroEL/TCP-1"/>
</dbReference>
<dbReference type="InterPro" id="IPR027409">
    <property type="entry name" value="GroEL-like_apical_dom_sf"/>
</dbReference>
<dbReference type="InterPro" id="IPR027413">
    <property type="entry name" value="GROEL-like_equatorial_sf"/>
</dbReference>
<dbReference type="InterPro" id="IPR027410">
    <property type="entry name" value="TCP-1-like_intermed_sf"/>
</dbReference>
<dbReference type="NCBIfam" id="TIGR02348">
    <property type="entry name" value="GroEL"/>
    <property type="match status" value="1"/>
</dbReference>
<dbReference type="NCBIfam" id="NF000592">
    <property type="entry name" value="PRK00013.1"/>
    <property type="match status" value="1"/>
</dbReference>
<dbReference type="NCBIfam" id="NF009487">
    <property type="entry name" value="PRK12849.1"/>
    <property type="match status" value="1"/>
</dbReference>
<dbReference type="NCBIfam" id="NF009488">
    <property type="entry name" value="PRK12850.1"/>
    <property type="match status" value="1"/>
</dbReference>
<dbReference type="NCBIfam" id="NF009489">
    <property type="entry name" value="PRK12851.1"/>
    <property type="match status" value="1"/>
</dbReference>
<dbReference type="PANTHER" id="PTHR45633">
    <property type="entry name" value="60 KDA HEAT SHOCK PROTEIN, MITOCHONDRIAL"/>
    <property type="match status" value="1"/>
</dbReference>
<dbReference type="Pfam" id="PF00118">
    <property type="entry name" value="Cpn60_TCP1"/>
    <property type="match status" value="1"/>
</dbReference>
<dbReference type="PRINTS" id="PR00298">
    <property type="entry name" value="CHAPERONIN60"/>
</dbReference>
<dbReference type="SUPFAM" id="SSF52029">
    <property type="entry name" value="GroEL apical domain-like"/>
    <property type="match status" value="1"/>
</dbReference>
<dbReference type="SUPFAM" id="SSF48592">
    <property type="entry name" value="GroEL equatorial domain-like"/>
    <property type="match status" value="1"/>
</dbReference>
<dbReference type="SUPFAM" id="SSF54849">
    <property type="entry name" value="GroEL-intermediate domain like"/>
    <property type="match status" value="1"/>
</dbReference>
<dbReference type="PROSITE" id="PS00296">
    <property type="entry name" value="CHAPERONINS_CPN60"/>
    <property type="match status" value="1"/>
</dbReference>
<name>CH60_ENTAG</name>
<proteinExistence type="inferred from homology"/>
<sequence>MAAKDVKFGNDARVKMLRGVNVLADAVKVTLGPKGRNVVLDKSFGAPTITKDGVSVAREIELEDKFENMGAQMVKEVASKANDAAGDGTTTATVLAQAIITEGLKAVAAGMNPMDLKRGIDKAVASAVEELKALSVPCSDSKAIAQVGTISANSDETVGKLIAEAMDKVGKEGVITVEDGTGLEDELDVVEGMQFDRGYLSPYFINKPETGAVELESPFILLADKKISNIREMLPVLEAVAKAGKPLVIIAEDVEGEALATLVVNTMRGIVKVAAVKAPGFGDRRKAMLQDIATLTGGTVISEEIGMELEKATLEDLGQAKRVVINKDTTTIIDGVGEEAAIQGRVGQIRKQIEEATSDYDREKLQERVAKLAGGVAVIKVGAATEVEMKEKKARVDDALHATRAAVEEGVVAGGGVALVRVAAKLAGLTAQNEDQNVGIKVALRAMEAPLRQIVSNAGEEPSVVANNVKAGEGNYGYNAATEEYGNMIDFGILDPTKVTRSALQYAASVAGLMITTECMVTDMPKGDAPDLXAAGMGG</sequence>
<keyword id="KW-0067">ATP-binding</keyword>
<keyword id="KW-0143">Chaperone</keyword>
<keyword id="KW-0963">Cytoplasm</keyword>
<keyword id="KW-0413">Isomerase</keyword>
<keyword id="KW-0547">Nucleotide-binding</keyword>
<organism>
    <name type="scientific">Enterobacter agglomerans</name>
    <name type="common">Erwinia herbicola</name>
    <name type="synonym">Pantoea agglomerans</name>
    <dbReference type="NCBI Taxonomy" id="549"/>
    <lineage>
        <taxon>Bacteria</taxon>
        <taxon>Pseudomonadati</taxon>
        <taxon>Pseudomonadota</taxon>
        <taxon>Gammaproteobacteria</taxon>
        <taxon>Enterobacterales</taxon>
        <taxon>Erwiniaceae</taxon>
        <taxon>Pantoea</taxon>
        <taxon>Pantoea agglomerans group</taxon>
    </lineage>
</organism>
<feature type="chain" id="PRO_0000063368" description="Chaperonin GroEL">
    <location>
        <begin position="1"/>
        <end position="539" status="greater than"/>
    </location>
</feature>
<feature type="binding site" evidence="1">
    <location>
        <begin position="30"/>
        <end position="33"/>
    </location>
    <ligand>
        <name>ATP</name>
        <dbReference type="ChEBI" id="CHEBI:30616"/>
    </ligand>
</feature>
<feature type="binding site" evidence="1">
    <location>
        <position position="51"/>
    </location>
    <ligand>
        <name>ATP</name>
        <dbReference type="ChEBI" id="CHEBI:30616"/>
    </ligand>
</feature>
<feature type="binding site" evidence="1">
    <location>
        <begin position="87"/>
        <end position="91"/>
    </location>
    <ligand>
        <name>ATP</name>
        <dbReference type="ChEBI" id="CHEBI:30616"/>
    </ligand>
</feature>
<feature type="binding site" evidence="1">
    <location>
        <position position="415"/>
    </location>
    <ligand>
        <name>ATP</name>
        <dbReference type="ChEBI" id="CHEBI:30616"/>
    </ligand>
</feature>
<feature type="binding site" evidence="1">
    <location>
        <begin position="479"/>
        <end position="481"/>
    </location>
    <ligand>
        <name>ATP</name>
        <dbReference type="ChEBI" id="CHEBI:30616"/>
    </ligand>
</feature>
<feature type="binding site" evidence="1">
    <location>
        <position position="495"/>
    </location>
    <ligand>
        <name>ATP</name>
        <dbReference type="ChEBI" id="CHEBI:30616"/>
    </ligand>
</feature>
<feature type="sequence variant" description="In strain: JCM 7000.">
    <original>A</original>
    <variation>S</variation>
    <location>
        <position position="98"/>
    </location>
</feature>
<feature type="sequence variant" description="In strain: JCM 7000.">
    <original>K</original>
    <variation>Q</variation>
    <location>
        <position position="122"/>
    </location>
</feature>
<feature type="sequence variant" description="In strain: JCM 7000.">
    <original>AS</original>
    <variation>IA</variation>
    <location>
        <begin position="125"/>
        <end position="126"/>
    </location>
</feature>
<feature type="sequence variant" description="In strain: JCM 7000.">
    <original>E</original>
    <variation>K</variation>
    <location>
        <position position="130"/>
    </location>
</feature>
<feature type="sequence variant" description="In strain: JCM 7000.">
    <original>K</original>
    <variation>Q</variation>
    <location>
        <position position="160"/>
    </location>
</feature>
<feature type="sequence variant" description="In strain: JCM 7000.">
    <original>E</original>
    <variation>Q</variation>
    <location>
        <position position="164"/>
    </location>
</feature>
<feature type="sequence variant" description="In strain: JCM 7000.">
    <original>D</original>
    <variation>E</variation>
    <location>
        <position position="167"/>
    </location>
</feature>
<feature type="sequence variant" description="In strain: JCM 7000.">
    <original>D</original>
    <variation>E</variation>
    <location>
        <position position="179"/>
    </location>
</feature>
<feature type="sequence variant" description="In strain: JCM 7000.">
    <original>E</original>
    <variation>Q</variation>
    <location>
        <position position="184"/>
    </location>
</feature>
<feature type="sequence variant" description="In strain: JCM 7000.">
    <original>V</original>
    <variation>I</variation>
    <location>
        <position position="213"/>
    </location>
</feature>
<feature type="sequence variant" description="In strain: JCM 7000.">
    <original>V</original>
    <variation>L</variation>
    <location>
        <position position="248"/>
    </location>
</feature>
<feature type="sequence variant" description="In strain: JCM 7000.">
    <original>T</original>
    <variation>I</variation>
    <location>
        <position position="294"/>
    </location>
</feature>
<feature type="sequence variant" description="In strain: JCM 7000.">
    <original>T</original>
    <variation>A</variation>
    <location>
        <position position="313"/>
    </location>
</feature>
<feature type="sequence variant" description="In strain: JCM 7000.">
    <original>A</original>
    <variation>T</variation>
    <location>
        <position position="341"/>
    </location>
</feature>
<feature type="sequence variant" description="In strain: JCM 7000.">
    <original>G</original>
    <variation>T</variation>
    <location>
        <position position="347"/>
    </location>
</feature>
<feature type="sequence variant" description="In strain: JCM 7000.">
    <original>K</original>
    <variation>Q</variation>
    <location>
        <position position="351"/>
    </location>
</feature>
<feature type="sequence variant" description="In strain: JCM 7000.">
    <original>R</original>
    <variation>K</variation>
    <location>
        <position position="362"/>
    </location>
</feature>
<feature type="sequence variant" description="In strain: JCM 7000.">
    <original>I</original>
    <variation>L</variation>
    <location>
        <position position="379"/>
    </location>
</feature>
<feature type="sequence variant" description="In strain: JCM 7000.">
    <original>D</original>
    <variation>E</variation>
    <location>
        <position position="397"/>
    </location>
</feature>
<feature type="sequence variant" description="In strain: JCM 7000.">
    <original>KLAGLTA</original>
    <variation>QLVDLRG</variation>
    <location>
        <begin position="425"/>
        <end position="431"/>
    </location>
</feature>
<feature type="sequence variant" description="In strain: JCM 7000.">
    <original>A</original>
    <variation>S</variation>
    <location>
        <position position="449"/>
    </location>
</feature>
<feature type="sequence variant" description="In strain: JCM 7000.">
    <original>E</original>
    <variation>D</variation>
    <location>
        <position position="473"/>
    </location>
</feature>
<feature type="sequence variant" description="In strain: JCM 7000.">
    <original>A</original>
    <variation>Q</variation>
    <location>
        <position position="481"/>
    </location>
</feature>
<feature type="sequence variant" description="In strain: JCM 7000.">
    <original>M</original>
    <variation>L</variation>
    <location>
        <position position="524"/>
    </location>
</feature>
<feature type="sequence variant" description="In strain: JCM 7000.">
    <original>AA</original>
    <variation>GGAG</variation>
    <location>
        <begin position="534"/>
        <end position="535"/>
    </location>
</feature>
<feature type="non-terminal residue">
    <location>
        <position position="539"/>
    </location>
</feature>
<accession>O66200</accession>
<accession>O66216</accession>
<reference key="1">
    <citation type="journal article" date="1997" name="J. Gen. Appl. Microbiol.">
        <title>Phylogenetical relationship based on groE genes among phenotypically related Enterobacter, Pantoea, Klebsiella, Serratia, and Erwinia species.</title>
        <authorList>
            <person name="Harada H."/>
            <person name="Ishikawa H."/>
        </authorList>
    </citation>
    <scope>NUCLEOTIDE SEQUENCE [GENOMIC DNA]</scope>
    <source>
        <strain>ATCC 27155 / DSM 3493 / CDC 1461-67 / CIP 57.51 / JCM 1236 / KCTC 2564 / LMG 1286 / NBRC 102470 / NCIMB 13953 / NCTC 9381</strain>
        <strain>JCM 7000 / CEH 803</strain>
    </source>
</reference>
<protein>
    <recommendedName>
        <fullName evidence="1">Chaperonin GroEL</fullName>
        <ecNumber evidence="1">5.6.1.7</ecNumber>
    </recommendedName>
    <alternativeName>
        <fullName evidence="1">60 kDa chaperonin</fullName>
    </alternativeName>
    <alternativeName>
        <fullName evidence="1">Chaperonin-60</fullName>
        <shortName evidence="1">Cpn60</shortName>
    </alternativeName>
</protein>
<evidence type="ECO:0000255" key="1">
    <source>
        <dbReference type="HAMAP-Rule" id="MF_00600"/>
    </source>
</evidence>